<keyword id="KW-0963">Cytoplasm</keyword>
<keyword id="KW-0378">Hydrolase</keyword>
<keyword id="KW-1185">Reference proteome</keyword>
<keyword id="KW-0694">RNA-binding</keyword>
<keyword id="KW-0820">tRNA-binding</keyword>
<gene>
    <name evidence="1" type="primary">dtd</name>
    <name type="ordered locus">HD_0745</name>
</gene>
<comment type="function">
    <text evidence="1">An aminoacyl-tRNA editing enzyme that deacylates mischarged D-aminoacyl-tRNAs. Also deacylates mischarged glycyl-tRNA(Ala), protecting cells against glycine mischarging by AlaRS. Acts via tRNA-based rather than protein-based catalysis; rejects L-amino acids rather than detecting D-amino acids in the active site. By recycling D-aminoacyl-tRNA to D-amino acids and free tRNA molecules, this enzyme counteracts the toxicity associated with the formation of D-aminoacyl-tRNA entities in vivo and helps enforce protein L-homochirality.</text>
</comment>
<comment type="catalytic activity">
    <reaction evidence="1">
        <text>glycyl-tRNA(Ala) + H2O = tRNA(Ala) + glycine + H(+)</text>
        <dbReference type="Rhea" id="RHEA:53744"/>
        <dbReference type="Rhea" id="RHEA-COMP:9657"/>
        <dbReference type="Rhea" id="RHEA-COMP:13640"/>
        <dbReference type="ChEBI" id="CHEBI:15377"/>
        <dbReference type="ChEBI" id="CHEBI:15378"/>
        <dbReference type="ChEBI" id="CHEBI:57305"/>
        <dbReference type="ChEBI" id="CHEBI:78442"/>
        <dbReference type="ChEBI" id="CHEBI:78522"/>
        <dbReference type="EC" id="3.1.1.96"/>
    </reaction>
</comment>
<comment type="catalytic activity">
    <reaction evidence="1">
        <text>a D-aminoacyl-tRNA + H2O = a tRNA + a D-alpha-amino acid + H(+)</text>
        <dbReference type="Rhea" id="RHEA:13953"/>
        <dbReference type="Rhea" id="RHEA-COMP:10123"/>
        <dbReference type="Rhea" id="RHEA-COMP:10124"/>
        <dbReference type="ChEBI" id="CHEBI:15377"/>
        <dbReference type="ChEBI" id="CHEBI:15378"/>
        <dbReference type="ChEBI" id="CHEBI:59871"/>
        <dbReference type="ChEBI" id="CHEBI:78442"/>
        <dbReference type="ChEBI" id="CHEBI:79333"/>
        <dbReference type="EC" id="3.1.1.96"/>
    </reaction>
</comment>
<comment type="subunit">
    <text evidence="1">Homodimer.</text>
</comment>
<comment type="subcellular location">
    <subcellularLocation>
        <location evidence="1">Cytoplasm</location>
    </subcellularLocation>
</comment>
<comment type="domain">
    <text evidence="1">A Gly-cisPro motif from one monomer fits into the active site of the other monomer to allow specific chiral rejection of L-amino acids.</text>
</comment>
<comment type="similarity">
    <text evidence="1">Belongs to the DTD family.</text>
</comment>
<comment type="sequence caution" evidence="2">
    <conflict type="erroneous initiation">
        <sequence resource="EMBL-CDS" id="AAP95655"/>
    </conflict>
    <text>Extended N-terminus.</text>
</comment>
<feature type="chain" id="PRO_0000164545" description="D-aminoacyl-tRNA deacylase">
    <location>
        <begin position="1"/>
        <end position="144"/>
    </location>
</feature>
<feature type="short sequence motif" description="Gly-cisPro motif, important for rejection of L-amino acids" evidence="1">
    <location>
        <begin position="136"/>
        <end position="137"/>
    </location>
</feature>
<organism>
    <name type="scientific">Haemophilus ducreyi (strain 35000HP / ATCC 700724)</name>
    <dbReference type="NCBI Taxonomy" id="233412"/>
    <lineage>
        <taxon>Bacteria</taxon>
        <taxon>Pseudomonadati</taxon>
        <taxon>Pseudomonadota</taxon>
        <taxon>Gammaproteobacteria</taxon>
        <taxon>Pasteurellales</taxon>
        <taxon>Pasteurellaceae</taxon>
        <taxon>Haemophilus</taxon>
    </lineage>
</organism>
<reference key="1">
    <citation type="submission" date="2003-06" db="EMBL/GenBank/DDBJ databases">
        <title>The complete genome sequence of Haemophilus ducreyi.</title>
        <authorList>
            <person name="Munson R.S. Jr."/>
            <person name="Ray W.C."/>
            <person name="Mahairas G."/>
            <person name="Sabo P."/>
            <person name="Mungur R."/>
            <person name="Johnson L."/>
            <person name="Nguyen D."/>
            <person name="Wang J."/>
            <person name="Forst C."/>
            <person name="Hood L."/>
        </authorList>
    </citation>
    <scope>NUCLEOTIDE SEQUENCE [LARGE SCALE GENOMIC DNA]</scope>
    <source>
        <strain>35000HP / ATCC 700724</strain>
    </source>
</reference>
<name>DTD_HAEDU</name>
<sequence>MIGLIQRVKSANVRVEQQIVGQIEQGLLVLLGVKQGDDQSKADKLLQKVLNYRVFADQQGKMNLNVQQAGGSLLIVSQFTLAADTQKGLRPSFSRGASPADAKALYDYFHQQAALHIHTETGQFAADMQVSLQNDGPVTFWLQV</sequence>
<protein>
    <recommendedName>
        <fullName evidence="1">D-aminoacyl-tRNA deacylase</fullName>
        <shortName evidence="1">DTD</shortName>
        <ecNumber evidence="1">3.1.1.96</ecNumber>
    </recommendedName>
    <alternativeName>
        <fullName evidence="1">Gly-tRNA(Ala) deacylase</fullName>
    </alternativeName>
</protein>
<accession>Q7VN41</accession>
<evidence type="ECO:0000255" key="1">
    <source>
        <dbReference type="HAMAP-Rule" id="MF_00518"/>
    </source>
</evidence>
<evidence type="ECO:0000305" key="2"/>
<proteinExistence type="inferred from homology"/>
<dbReference type="EC" id="3.1.1.96" evidence="1"/>
<dbReference type="EMBL" id="AE017143">
    <property type="protein sequence ID" value="AAP95655.1"/>
    <property type="status" value="ALT_INIT"/>
    <property type="molecule type" value="Genomic_DNA"/>
</dbReference>
<dbReference type="RefSeq" id="WP_041603416.1">
    <property type="nucleotide sequence ID" value="NC_002940.2"/>
</dbReference>
<dbReference type="SMR" id="Q7VN41"/>
<dbReference type="STRING" id="233412.HD_0745"/>
<dbReference type="KEGG" id="hdu:HD_0745"/>
<dbReference type="eggNOG" id="COG1490">
    <property type="taxonomic scope" value="Bacteria"/>
</dbReference>
<dbReference type="HOGENOM" id="CLU_076901_1_1_6"/>
<dbReference type="OrthoDB" id="9801395at2"/>
<dbReference type="Proteomes" id="UP000001022">
    <property type="component" value="Chromosome"/>
</dbReference>
<dbReference type="GO" id="GO:0005737">
    <property type="term" value="C:cytoplasm"/>
    <property type="evidence" value="ECO:0007669"/>
    <property type="project" value="UniProtKB-SubCell"/>
</dbReference>
<dbReference type="GO" id="GO:0051500">
    <property type="term" value="F:D-tyrosyl-tRNA(Tyr) deacylase activity"/>
    <property type="evidence" value="ECO:0007669"/>
    <property type="project" value="TreeGrafter"/>
</dbReference>
<dbReference type="GO" id="GO:0106026">
    <property type="term" value="F:Gly-tRNA(Ala) deacylase activity"/>
    <property type="evidence" value="ECO:0007669"/>
    <property type="project" value="UniProtKB-UniRule"/>
</dbReference>
<dbReference type="GO" id="GO:0043908">
    <property type="term" value="F:Ser(Gly)-tRNA(Ala) hydrolase activity"/>
    <property type="evidence" value="ECO:0007669"/>
    <property type="project" value="UniProtKB-UniRule"/>
</dbReference>
<dbReference type="GO" id="GO:0000049">
    <property type="term" value="F:tRNA binding"/>
    <property type="evidence" value="ECO:0007669"/>
    <property type="project" value="UniProtKB-UniRule"/>
</dbReference>
<dbReference type="GO" id="GO:0019478">
    <property type="term" value="P:D-amino acid catabolic process"/>
    <property type="evidence" value="ECO:0007669"/>
    <property type="project" value="UniProtKB-UniRule"/>
</dbReference>
<dbReference type="CDD" id="cd00563">
    <property type="entry name" value="Dtyr_deacylase"/>
    <property type="match status" value="1"/>
</dbReference>
<dbReference type="FunFam" id="3.50.80.10:FF:000001">
    <property type="entry name" value="D-aminoacyl-tRNA deacylase"/>
    <property type="match status" value="1"/>
</dbReference>
<dbReference type="Gene3D" id="3.50.80.10">
    <property type="entry name" value="D-tyrosyl-tRNA(Tyr) deacylase"/>
    <property type="match status" value="1"/>
</dbReference>
<dbReference type="HAMAP" id="MF_00518">
    <property type="entry name" value="Deacylase_Dtd"/>
    <property type="match status" value="1"/>
</dbReference>
<dbReference type="InterPro" id="IPR003732">
    <property type="entry name" value="Daa-tRNA_deacyls_DTD"/>
</dbReference>
<dbReference type="InterPro" id="IPR023509">
    <property type="entry name" value="DTD-like_sf"/>
</dbReference>
<dbReference type="NCBIfam" id="TIGR00256">
    <property type="entry name" value="D-aminoacyl-tRNA deacylase"/>
    <property type="match status" value="1"/>
</dbReference>
<dbReference type="PANTHER" id="PTHR10472:SF5">
    <property type="entry name" value="D-AMINOACYL-TRNA DEACYLASE 1"/>
    <property type="match status" value="1"/>
</dbReference>
<dbReference type="PANTHER" id="PTHR10472">
    <property type="entry name" value="D-TYROSYL-TRNA TYR DEACYLASE"/>
    <property type="match status" value="1"/>
</dbReference>
<dbReference type="Pfam" id="PF02580">
    <property type="entry name" value="Tyr_Deacylase"/>
    <property type="match status" value="1"/>
</dbReference>
<dbReference type="SUPFAM" id="SSF69500">
    <property type="entry name" value="DTD-like"/>
    <property type="match status" value="1"/>
</dbReference>